<keyword id="KW-0106">Calcium</keyword>
<keyword id="KW-0130">Cell adhesion</keyword>
<keyword id="KW-0965">Cell junction</keyword>
<keyword id="KW-1003">Cell membrane</keyword>
<keyword id="KW-0165">Cleavage on pair of basic residues</keyword>
<keyword id="KW-0325">Glycoprotein</keyword>
<keyword id="KW-0472">Membrane</keyword>
<keyword id="KW-0479">Metal-binding</keyword>
<keyword id="KW-0597">Phosphoprotein</keyword>
<keyword id="KW-1185">Reference proteome</keyword>
<keyword id="KW-0677">Repeat</keyword>
<keyword id="KW-0732">Signal</keyword>
<keyword id="KW-0812">Transmembrane</keyword>
<keyword id="KW-1133">Transmembrane helix</keyword>
<feature type="signal peptide" evidence="4">
    <location>
        <begin position="1"/>
        <end position="25"/>
    </location>
</feature>
<feature type="propeptide" id="PRO_0000003735" evidence="4">
    <location>
        <begin position="26"/>
        <end position="159"/>
    </location>
</feature>
<feature type="chain" id="PRO_0000003736" description="Cadherin-2">
    <location>
        <begin position="160"/>
        <end position="906"/>
    </location>
</feature>
<feature type="topological domain" description="Extracellular" evidence="4">
    <location>
        <begin position="160"/>
        <end position="724"/>
    </location>
</feature>
<feature type="transmembrane region" description="Helical" evidence="4">
    <location>
        <begin position="725"/>
        <end position="745"/>
    </location>
</feature>
<feature type="topological domain" description="Cytoplasmic" evidence="4">
    <location>
        <begin position="746"/>
        <end position="906"/>
    </location>
</feature>
<feature type="domain" description="Cadherin 1" evidence="5">
    <location>
        <begin position="160"/>
        <end position="267"/>
    </location>
</feature>
<feature type="domain" description="Cadherin 2" evidence="5">
    <location>
        <begin position="268"/>
        <end position="382"/>
    </location>
</feature>
<feature type="domain" description="Cadherin 3" evidence="5">
    <location>
        <begin position="383"/>
        <end position="497"/>
    </location>
</feature>
<feature type="domain" description="Cadherin 4" evidence="5">
    <location>
        <begin position="498"/>
        <end position="603"/>
    </location>
</feature>
<feature type="domain" description="Cadherin 5" evidence="5">
    <location>
        <begin position="604"/>
        <end position="717"/>
    </location>
</feature>
<feature type="region of interest" description="Disordered" evidence="6">
    <location>
        <begin position="863"/>
        <end position="883"/>
    </location>
</feature>
<feature type="compositionally biased region" description="Low complexity" evidence="6">
    <location>
        <begin position="863"/>
        <end position="880"/>
    </location>
</feature>
<feature type="binding site" evidence="2">
    <location>
        <position position="170"/>
    </location>
    <ligand>
        <name>Ca(2+)</name>
        <dbReference type="ChEBI" id="CHEBI:29108"/>
        <label>1</label>
    </ligand>
</feature>
<feature type="binding site" evidence="2">
    <location>
        <position position="170"/>
    </location>
    <ligand>
        <name>Ca(2+)</name>
        <dbReference type="ChEBI" id="CHEBI:29108"/>
        <label>2</label>
    </ligand>
</feature>
<feature type="binding site" evidence="2">
    <location>
        <position position="226"/>
    </location>
    <ligand>
        <name>Ca(2+)</name>
        <dbReference type="ChEBI" id="CHEBI:29108"/>
        <label>1</label>
    </ligand>
</feature>
<feature type="binding site" evidence="2">
    <location>
        <position position="228"/>
    </location>
    <ligand>
        <name>Ca(2+)</name>
        <dbReference type="ChEBI" id="CHEBI:29108"/>
        <label>1</label>
    </ligand>
</feature>
<feature type="binding site" evidence="2">
    <location>
        <position position="228"/>
    </location>
    <ligand>
        <name>Ca(2+)</name>
        <dbReference type="ChEBI" id="CHEBI:29108"/>
        <label>2</label>
    </ligand>
</feature>
<feature type="binding site" evidence="2">
    <location>
        <position position="259"/>
    </location>
    <ligand>
        <name>Ca(2+)</name>
        <dbReference type="ChEBI" id="CHEBI:29108"/>
        <label>2</label>
    </ligand>
</feature>
<feature type="binding site" evidence="2">
    <location>
        <position position="260"/>
    </location>
    <ligand>
        <name>Ca(2+)</name>
        <dbReference type="ChEBI" id="CHEBI:29108"/>
        <label>2</label>
    </ligand>
</feature>
<feature type="binding site" evidence="2">
    <location>
        <position position="261"/>
    </location>
    <ligand>
        <name>Ca(2+)</name>
        <dbReference type="ChEBI" id="CHEBI:29108"/>
        <label>3</label>
    </ligand>
</feature>
<feature type="binding site" evidence="2">
    <location>
        <position position="262"/>
    </location>
    <ligand>
        <name>Ca(2+)</name>
        <dbReference type="ChEBI" id="CHEBI:29108"/>
        <label>1</label>
    </ligand>
</feature>
<feature type="binding site" evidence="2">
    <location>
        <position position="262"/>
    </location>
    <ligand>
        <name>Ca(2+)</name>
        <dbReference type="ChEBI" id="CHEBI:29108"/>
        <label>2</label>
    </ligand>
</feature>
<feature type="binding site" evidence="2">
    <location>
        <position position="263"/>
    </location>
    <ligand>
        <name>Ca(2+)</name>
        <dbReference type="ChEBI" id="CHEBI:29108"/>
        <label>3</label>
    </ligand>
</feature>
<feature type="binding site" evidence="2">
    <location>
        <position position="293"/>
    </location>
    <ligand>
        <name>Ca(2+)</name>
        <dbReference type="ChEBI" id="CHEBI:29108"/>
        <label>3</label>
    </ligand>
</feature>
<feature type="binding site" evidence="2">
    <location>
        <position position="295"/>
    </location>
    <ligand>
        <name>Ca(2+)</name>
        <dbReference type="ChEBI" id="CHEBI:29108"/>
        <label>2</label>
    </ligand>
</feature>
<feature type="binding site" evidence="2">
    <location>
        <position position="301"/>
    </location>
    <ligand>
        <name>Ca(2+)</name>
        <dbReference type="ChEBI" id="CHEBI:29108"/>
        <label>3</label>
    </ligand>
</feature>
<feature type="binding site" evidence="2">
    <location>
        <position position="353"/>
    </location>
    <ligand>
        <name>Ca(2+)</name>
        <dbReference type="ChEBI" id="CHEBI:29108"/>
        <label>3</label>
    </ligand>
</feature>
<feature type="modified residue" description="Phosphoserine" evidence="3">
    <location>
        <position position="96"/>
    </location>
</feature>
<feature type="glycosylation site" description="N-linked (GlcNAc...) asparagine" evidence="4">
    <location>
        <position position="190"/>
    </location>
</feature>
<feature type="glycosylation site" description="N-linked (GlcNAc...) asparagine" evidence="4">
    <location>
        <position position="273"/>
    </location>
</feature>
<feature type="glycosylation site" description="N-linked (GlcNAc...) asparagine" evidence="4">
    <location>
        <position position="325"/>
    </location>
</feature>
<feature type="glycosylation site" description="N-linked (GlcNAc...) asparagine" evidence="4">
    <location>
        <position position="402"/>
    </location>
</feature>
<feature type="glycosylation site" description="N-linked (GlcNAc...) asparagine" evidence="4">
    <location>
        <position position="572"/>
    </location>
</feature>
<feature type="glycosylation site" description="N-linked (GlcNAc...) asparagine" evidence="4">
    <location>
        <position position="622"/>
    </location>
</feature>
<feature type="glycosylation site" description="N-linked (GlcNAc...) asparagine" evidence="4">
    <location>
        <position position="651"/>
    </location>
</feature>
<feature type="glycosylation site" description="N-linked (GlcNAc...) asparagine" evidence="4">
    <location>
        <position position="692"/>
    </location>
</feature>
<feature type="mutagenesis site" description="Decrease in PCDH8-binding; alone or when associated with G-741." evidence="7">
    <original>L</original>
    <variation>P</variation>
    <location>
        <position position="740"/>
    </location>
</feature>
<feature type="mutagenesis site" description="Decrease in PCDH8-binding; when associated with P-740." evidence="7">
    <original>M</original>
    <variation>G</variation>
    <location>
        <position position="741"/>
    </location>
</feature>
<feature type="sequence conflict" description="In Ref. 2; BAA84919." evidence="10" ref="2">
    <original>G</original>
    <variation>A</variation>
    <location>
        <position position="7"/>
    </location>
</feature>
<feature type="sequence conflict" description="In Ref. 2; BAA84919." evidence="10" ref="2">
    <original>T</original>
    <variation>D</variation>
    <location>
        <position position="48"/>
    </location>
</feature>
<feature type="sequence conflict" description="In Ref. 2; BAA84919." evidence="10" ref="2">
    <original>A</original>
    <variation>R</variation>
    <location>
        <position position="153"/>
    </location>
</feature>
<feature type="sequence conflict" description="In Ref. 2; BAA84919." evidence="10" ref="2">
    <original>A</original>
    <variation>V</variation>
    <location>
        <position position="646"/>
    </location>
</feature>
<feature type="sequence conflict" description="In Ref. 2; BAA84919." evidence="10" ref="2">
    <original>N</original>
    <variation>K</variation>
    <location>
        <position position="658"/>
    </location>
</feature>
<feature type="sequence conflict" description="In Ref. 2; BAA84919." evidence="10" ref="2">
    <original>T</original>
    <variation>A</variation>
    <location>
        <position position="724"/>
    </location>
</feature>
<organism>
    <name type="scientific">Rattus norvegicus</name>
    <name type="common">Rat</name>
    <dbReference type="NCBI Taxonomy" id="10116"/>
    <lineage>
        <taxon>Eukaryota</taxon>
        <taxon>Metazoa</taxon>
        <taxon>Chordata</taxon>
        <taxon>Craniata</taxon>
        <taxon>Vertebrata</taxon>
        <taxon>Euteleostomi</taxon>
        <taxon>Mammalia</taxon>
        <taxon>Eutheria</taxon>
        <taxon>Euarchontoglires</taxon>
        <taxon>Glires</taxon>
        <taxon>Rodentia</taxon>
        <taxon>Myomorpha</taxon>
        <taxon>Muroidea</taxon>
        <taxon>Muridae</taxon>
        <taxon>Murinae</taxon>
        <taxon>Rattus</taxon>
    </lineage>
</organism>
<evidence type="ECO:0000250" key="1">
    <source>
        <dbReference type="UniProtKB" id="P10288"/>
    </source>
</evidence>
<evidence type="ECO:0000250" key="2">
    <source>
        <dbReference type="UniProtKB" id="P15116"/>
    </source>
</evidence>
<evidence type="ECO:0000250" key="3">
    <source>
        <dbReference type="UniProtKB" id="P19022"/>
    </source>
</evidence>
<evidence type="ECO:0000255" key="4"/>
<evidence type="ECO:0000255" key="5">
    <source>
        <dbReference type="PROSITE-ProRule" id="PRU00043"/>
    </source>
</evidence>
<evidence type="ECO:0000256" key="6">
    <source>
        <dbReference type="SAM" id="MobiDB-lite"/>
    </source>
</evidence>
<evidence type="ECO:0000269" key="7">
    <source>
    </source>
</evidence>
<evidence type="ECO:0000269" key="8">
    <source>
    </source>
</evidence>
<evidence type="ECO:0000269" key="9">
    <source>
    </source>
</evidence>
<evidence type="ECO:0000305" key="10"/>
<proteinExistence type="evidence at protein level"/>
<reference key="1">
    <citation type="journal article" date="1998" name="Endocrinology">
        <title>Rat testicular N-cadherin: its complementary deoxyribonucleic acid cloning and regulation.</title>
        <authorList>
            <person name="Chung S.S."/>
            <person name="Mo M.Y."/>
            <person name="Silvestrini B."/>
            <person name="Lee W.M."/>
            <person name="Cheng C.Y."/>
        </authorList>
    </citation>
    <scope>NUCLEOTIDE SEQUENCE [MRNA]</scope>
    <scope>TISSUE SPECIFICITY</scope>
    <source>
        <strain>Sprague-Dawley</strain>
        <tissue>Testis</tissue>
    </source>
</reference>
<reference key="2">
    <citation type="submission" date="1998-09" db="EMBL/GenBank/DDBJ databases">
        <title>Rat N-cadherin cDNA.</title>
        <authorList>
            <person name="Asai K."/>
            <person name="Tada T."/>
            <person name="Yamamoto M."/>
            <person name="Tada A."/>
            <person name="Mizuno M."/>
            <person name="Eimoto T."/>
            <person name="Kato T."/>
        </authorList>
    </citation>
    <scope>NUCLEOTIDE SEQUENCE [MRNA]</scope>
    <source>
        <strain>Sprague-Dawley</strain>
        <tissue>Brain</tissue>
    </source>
</reference>
<reference key="3">
    <citation type="journal article" date="2007" name="Neuron">
        <title>Activity-induced protocadherin arcadlin regulates dendritic spine number by triggering N-cadherin endocytosis via TAO2beta and p38 MAP kinases.</title>
        <authorList>
            <person name="Yasuda S."/>
            <person name="Tanaka H."/>
            <person name="Sugiura H."/>
            <person name="Okamura K."/>
            <person name="Sakaguchi T."/>
            <person name="Tran U."/>
            <person name="Takemiya T."/>
            <person name="Mizoguchi A."/>
            <person name="Yagita Y."/>
            <person name="Sakurai T."/>
            <person name="De Robertis E.M."/>
            <person name="Yamagata K."/>
        </authorList>
    </citation>
    <scope>INTERACTION WITH PCDH8</scope>
    <scope>MUTAGENESIS OF LEU-740 AND MET-741</scope>
</reference>
<reference key="4">
    <citation type="journal article" date="2011" name="Circ. Res.">
        <title>Interactions between ankyrin-G, Plakophilin-2, and Connexin43 at the cardiac intercalated disc.</title>
        <authorList>
            <person name="Sato P.Y."/>
            <person name="Coombs W."/>
            <person name="Lin X."/>
            <person name="Nekrasova O."/>
            <person name="Green K.J."/>
            <person name="Isom L.L."/>
            <person name="Taffet S.M."/>
            <person name="Delmar M."/>
        </authorList>
    </citation>
    <scope>SUBCELLULAR LOCATION</scope>
</reference>
<comment type="function">
    <text evidence="1 2">Calcium-dependent cell adhesion protein; preferentially mediates homotypic cell-cell adhesion by dimerization with a CDH2 chain from another cell. Cadherins may thus contribute to the sorting of heterogeneous cell types. Acts as a regulator of neural stem cells quiescence by mediating anchorage of neural stem cells to ependymocytes in the adult subependymal zone: upon cleavage by MMP24, CDH2-mediated anchorage is affected, leading to modulate neural stem cell quiescence. Plays a role in cell-to-cell junction formation between pancreatic beta cells and neural crest stem (NCS) cells, promoting the formation of processes by NCS cells (By similarity). Required for proper neurite branching. Required for pre- and postsynaptic organization (By similarity). CDH2 may be involved in neuronal recognition mechanism. In hippocampal neurons, may regulate dendritic spine density.</text>
</comment>
<comment type="subunit">
    <text evidence="2 3 7">Homodimer (via extracellular region). Can also form heterodimers with other cadherins (via extracellular region). Dimerization occurs in trans, i.e. with a cadherin chain from another cell (By similarity). Interacts with PCDH8; this complex may also include TAOK2 (PubMed:17988630). The interaction with PCDH8 may lead to internalization through TAOK2/p38 MAPK pathway (PubMed:17988630). Identified in a complex containing FGFR4, NCAM1, CDH2, PLCG1, FRS2, SRC, SHC1, GAP43 and CTTN. May interact with OBSCN (via protein kinase domain 2) (By similarity). Interacts with FBXO45 (By similarity).</text>
</comment>
<comment type="subcellular location">
    <subcellularLocation>
        <location evidence="2">Cell membrane</location>
        <topology evidence="4">Single-pass type I membrane protein</topology>
    </subcellularLocation>
    <subcellularLocation>
        <location evidence="2">Cell membrane</location>
        <location evidence="2">Sarcolemma</location>
    </subcellularLocation>
    <subcellularLocation>
        <location evidence="2">Cell junction</location>
    </subcellularLocation>
    <subcellularLocation>
        <location evidence="2">Cell surface</location>
    </subcellularLocation>
    <subcellularLocation>
        <location evidence="8">Cell junction</location>
        <location evidence="8">Desmosome</location>
    </subcellularLocation>
    <subcellularLocation>
        <location evidence="2">Cell junction</location>
        <location evidence="2">Adherens junction</location>
    </subcellularLocation>
    <text evidence="2">Colocalizes with TMEM65 at the intercalated disk in cardiomyocytes (By similarity). Colocalizes with OBSCN at the intercalated disk and sarcolemma in cardiomyocytes (By similarity).</text>
</comment>
<comment type="tissue specificity">
    <text evidence="9">In testis, expressed in Sertoli and germ cells.</text>
</comment>
<comment type="domain">
    <text evidence="2">Three calcium ions are usually bound at the interface of each cadherin domain and rigidify the connections, imparting a strong curvature to the full-length ectodomain. Calcium-binding sites are occupied sequentially in the order of site 3, then site 2 and site 1.</text>
</comment>
<comment type="PTM">
    <text evidence="2">Cleaved by MMP24. Ectodomain cleavage leads to the generation of a soluble 90 kDa N-terminal soluble fragment and a 45 kDa membrane-bound C-terminal fragment 1 (CTF1), which is further cleaved by gamma-secretase into a 35 kDa (By similarity). Cleavage in neural stem cells by MMP24 affects CDH2-mediated anchorage of neural stem cells to ependymocytes in the adult subependymal zone, leading to modulate neural stem cell quiescence (By similarity).</text>
</comment>
<comment type="PTM">
    <text evidence="2">May be phosphorylated by OBSCN.</text>
</comment>
<protein>
    <recommendedName>
        <fullName>Cadherin-2</fullName>
    </recommendedName>
    <alternativeName>
        <fullName>Neural cadherin</fullName>
        <shortName>N-cadherin</shortName>
    </alternativeName>
    <cdAntigenName>CD325</cdAntigenName>
</protein>
<accession>Q9Z1Y3</accession>
<accession>Q9R0T5</accession>
<name>CADH2_RAT</name>
<sequence>MCRIAGGPRTLLPLLAALLQASLEASGELALCKTGFPEDVYSAVLPKTVHEGQPLLNVKFSNCNRKRKVQYESSEPADFKVDEDGTVYAVRSFPLSAEQAKFLIYAQDKETQEKWQVAVNLSLEPSLTEEPMKEPHEIEEIVFPRQLAKHSGALQRQKRDWVIPPINLPENSRGPFPQELVRIRSDRDKNLSLRYSVTGPGADQPPTGIFIINPISGQLSVTKPLDRELIARFHLRAHAVDINGNQVENPIDIVINVIDMNDNRPEFLHQVWNGSVPEGSKPGTYVMTVTAIDADDPNALNGMLRYRILSQAPSTPSPNMFTINNETGDIITVAAGLDREKVQQYTLIIQATDMEGNPTYGLSNTATAVITVTDVNDNPPEFTAMTFYGEVPENRVDVIVANLTVTDKDQPHTPAWNAAYRISGGDPTGRFAILTDPNSNDGLVTVVKPIDFETNRMFVLTVAAENQVPLAKGIQHPPQSTATVSVTVIDVNENPYFAPNPKIIRQEEGLHAGTMLTTLTAQDPDRYMQQNIRYTKLSDPANWLKIDPVNGQITTIAVLDRESPNVKNNIYNATFLASDNGIPPMSGTGTLQIYLLDINDNAPQVLPQEAETCETPEPNSINITALDYDIDPNAGPFAFDLPLSPATIKRNWTITRLNGDFAQLNLKIKFLEAGIYEVPIVITDSGNPPKSNISILRVKVCQCDSNGDCTDVDRIVGAGLGTGTIIAILLCIIILLILVLMFVVWMKRRDKERQAKQLLIDPEDDVRDNILKYDEEGGGEEDQDYDLSQLQQPDTVEPDAIKPVGIRRLDERPIHAEPQYPVRSAAPHPGDIGDFINEGLKAADNDPTAPPYDSLLVFDYEGSGSTAGSLSSLNSSSSGGDQDYDYLNDWGPRFKKLADMYGGGDD</sequence>
<gene>
    <name type="primary">Cdh2</name>
</gene>
<dbReference type="EMBL" id="AF097593">
    <property type="protein sequence ID" value="AAC83818.1"/>
    <property type="molecule type" value="mRNA"/>
</dbReference>
<dbReference type="EMBL" id="AB017695">
    <property type="protein sequence ID" value="BAA84919.1"/>
    <property type="molecule type" value="mRNA"/>
</dbReference>
<dbReference type="RefSeq" id="NP_112623.1">
    <property type="nucleotide sequence ID" value="NM_031333.1"/>
</dbReference>
<dbReference type="SMR" id="Q9Z1Y3"/>
<dbReference type="BioGRID" id="249720">
    <property type="interactions" value="6"/>
</dbReference>
<dbReference type="CORUM" id="Q9Z1Y3"/>
<dbReference type="DIP" id="DIP-48902N"/>
<dbReference type="FunCoup" id="Q9Z1Y3">
    <property type="interactions" value="1097"/>
</dbReference>
<dbReference type="IntAct" id="Q9Z1Y3">
    <property type="interactions" value="2"/>
</dbReference>
<dbReference type="STRING" id="10116.ENSRNOP00000021170"/>
<dbReference type="GlyCosmos" id="Q9Z1Y3">
    <property type="glycosylation" value="8 sites, 4 glycans"/>
</dbReference>
<dbReference type="GlyGen" id="Q9Z1Y3">
    <property type="glycosylation" value="9 sites, 4 N-linked glycans (1 site), 2 N-linked;o-linked glycans (1 site)"/>
</dbReference>
<dbReference type="iPTMnet" id="Q9Z1Y3"/>
<dbReference type="PhosphoSitePlus" id="Q9Z1Y3"/>
<dbReference type="SwissPalm" id="Q9Z1Y3"/>
<dbReference type="PaxDb" id="10116-ENSRNOP00000021170"/>
<dbReference type="GeneID" id="83501"/>
<dbReference type="KEGG" id="rno:83501"/>
<dbReference type="AGR" id="RGD:69280"/>
<dbReference type="CTD" id="1000"/>
<dbReference type="RGD" id="69280">
    <property type="gene designation" value="Cdh2"/>
</dbReference>
<dbReference type="eggNOG" id="KOG3594">
    <property type="taxonomic scope" value="Eukaryota"/>
</dbReference>
<dbReference type="InParanoid" id="Q9Z1Y3"/>
<dbReference type="PhylomeDB" id="Q9Z1Y3"/>
<dbReference type="Reactome" id="R-RNO-381426">
    <property type="pathway name" value="Regulation of Insulin-like Growth Factor (IGF) transport and uptake by Insulin-like Growth Factor Binding Proteins (IGFBPs)"/>
</dbReference>
<dbReference type="Reactome" id="R-RNO-418990">
    <property type="pathway name" value="Adherens junctions interactions"/>
</dbReference>
<dbReference type="Reactome" id="R-RNO-525793">
    <property type="pathway name" value="Myogenesis"/>
</dbReference>
<dbReference type="Reactome" id="R-RNO-8957275">
    <property type="pathway name" value="Post-translational protein phosphorylation"/>
</dbReference>
<dbReference type="PRO" id="PR:Q9Z1Y3"/>
<dbReference type="Proteomes" id="UP000002494">
    <property type="component" value="Unplaced"/>
</dbReference>
<dbReference type="GO" id="GO:0005912">
    <property type="term" value="C:adherens junction"/>
    <property type="evidence" value="ECO:0000314"/>
    <property type="project" value="RGD"/>
</dbReference>
<dbReference type="GO" id="GO:0045177">
    <property type="term" value="C:apical part of cell"/>
    <property type="evidence" value="ECO:0000318"/>
    <property type="project" value="GO_Central"/>
</dbReference>
<dbReference type="GO" id="GO:0016324">
    <property type="term" value="C:apical plasma membrane"/>
    <property type="evidence" value="ECO:0000266"/>
    <property type="project" value="RGD"/>
</dbReference>
<dbReference type="GO" id="GO:0016327">
    <property type="term" value="C:apicolateral plasma membrane"/>
    <property type="evidence" value="ECO:0000266"/>
    <property type="project" value="RGD"/>
</dbReference>
<dbReference type="GO" id="GO:0016323">
    <property type="term" value="C:basolateral plasma membrane"/>
    <property type="evidence" value="ECO:0000266"/>
    <property type="project" value="RGD"/>
</dbReference>
<dbReference type="GO" id="GO:0016342">
    <property type="term" value="C:catenin complex"/>
    <property type="evidence" value="ECO:0000266"/>
    <property type="project" value="RGD"/>
</dbReference>
<dbReference type="GO" id="GO:0030054">
    <property type="term" value="C:cell junction"/>
    <property type="evidence" value="ECO:0000266"/>
    <property type="project" value="RGD"/>
</dbReference>
<dbReference type="GO" id="GO:0009986">
    <property type="term" value="C:cell surface"/>
    <property type="evidence" value="ECO:0000250"/>
    <property type="project" value="UniProtKB"/>
</dbReference>
<dbReference type="GO" id="GO:0005911">
    <property type="term" value="C:cell-cell junction"/>
    <property type="evidence" value="ECO:0000266"/>
    <property type="project" value="RGD"/>
</dbReference>
<dbReference type="GO" id="GO:0030864">
    <property type="term" value="C:cortical actin cytoskeleton"/>
    <property type="evidence" value="ECO:0000266"/>
    <property type="project" value="RGD"/>
</dbReference>
<dbReference type="GO" id="GO:0005737">
    <property type="term" value="C:cytoplasm"/>
    <property type="evidence" value="ECO:0000266"/>
    <property type="project" value="RGD"/>
</dbReference>
<dbReference type="GO" id="GO:0030057">
    <property type="term" value="C:desmosome"/>
    <property type="evidence" value="ECO:0000314"/>
    <property type="project" value="UniProtKB"/>
</dbReference>
<dbReference type="GO" id="GO:0005916">
    <property type="term" value="C:fascia adherens"/>
    <property type="evidence" value="ECO:0000314"/>
    <property type="project" value="RGD"/>
</dbReference>
<dbReference type="GO" id="GO:0098978">
    <property type="term" value="C:glutamatergic synapse"/>
    <property type="evidence" value="ECO:0000314"/>
    <property type="project" value="SynGO"/>
</dbReference>
<dbReference type="GO" id="GO:0014704">
    <property type="term" value="C:intercalated disc"/>
    <property type="evidence" value="ECO:0000314"/>
    <property type="project" value="BHF-UCL"/>
</dbReference>
<dbReference type="GO" id="GO:0030027">
    <property type="term" value="C:lamellipodium"/>
    <property type="evidence" value="ECO:0000266"/>
    <property type="project" value="RGD"/>
</dbReference>
<dbReference type="GO" id="GO:0016020">
    <property type="term" value="C:membrane"/>
    <property type="evidence" value="ECO:0000314"/>
    <property type="project" value="MGI"/>
</dbReference>
<dbReference type="GO" id="GO:0043005">
    <property type="term" value="C:neuron projection"/>
    <property type="evidence" value="ECO:0000318"/>
    <property type="project" value="GO_Central"/>
</dbReference>
<dbReference type="GO" id="GO:0005886">
    <property type="term" value="C:plasma membrane"/>
    <property type="evidence" value="ECO:0000314"/>
    <property type="project" value="BHF-UCL"/>
</dbReference>
<dbReference type="GO" id="GO:0044853">
    <property type="term" value="C:plasma membrane raft"/>
    <property type="evidence" value="ECO:0000266"/>
    <property type="project" value="RGD"/>
</dbReference>
<dbReference type="GO" id="GO:0098793">
    <property type="term" value="C:presynapse"/>
    <property type="evidence" value="ECO:0007669"/>
    <property type="project" value="GOC"/>
</dbReference>
<dbReference type="GO" id="GO:0032991">
    <property type="term" value="C:protein-containing complex"/>
    <property type="evidence" value="ECO:0000314"/>
    <property type="project" value="RGD"/>
</dbReference>
<dbReference type="GO" id="GO:0042383">
    <property type="term" value="C:sarcolemma"/>
    <property type="evidence" value="ECO:0000266"/>
    <property type="project" value="RGD"/>
</dbReference>
<dbReference type="GO" id="GO:0045202">
    <property type="term" value="C:synapse"/>
    <property type="evidence" value="ECO:0000314"/>
    <property type="project" value="BHF-UCL"/>
</dbReference>
<dbReference type="GO" id="GO:0030315">
    <property type="term" value="C:T-tubule"/>
    <property type="evidence" value="ECO:0000314"/>
    <property type="project" value="BHF-UCL"/>
</dbReference>
<dbReference type="GO" id="GO:0045294">
    <property type="term" value="F:alpha-catenin binding"/>
    <property type="evidence" value="ECO:0000266"/>
    <property type="project" value="RGD"/>
</dbReference>
<dbReference type="GO" id="GO:0008013">
    <property type="term" value="F:beta-catenin binding"/>
    <property type="evidence" value="ECO:0000353"/>
    <property type="project" value="RGD"/>
</dbReference>
<dbReference type="GO" id="GO:0045296">
    <property type="term" value="F:cadherin binding"/>
    <property type="evidence" value="ECO:0000318"/>
    <property type="project" value="GO_Central"/>
</dbReference>
<dbReference type="GO" id="GO:0005509">
    <property type="term" value="F:calcium ion binding"/>
    <property type="evidence" value="ECO:0000250"/>
    <property type="project" value="UniProtKB"/>
</dbReference>
<dbReference type="GO" id="GO:0019899">
    <property type="term" value="F:enzyme binding"/>
    <property type="evidence" value="ECO:0000266"/>
    <property type="project" value="RGD"/>
</dbReference>
<dbReference type="GO" id="GO:0045295">
    <property type="term" value="F:gamma-catenin binding"/>
    <property type="evidence" value="ECO:0000266"/>
    <property type="project" value="RGD"/>
</dbReference>
<dbReference type="GO" id="GO:0042802">
    <property type="term" value="F:identical protein binding"/>
    <property type="evidence" value="ECO:0000266"/>
    <property type="project" value="RGD"/>
</dbReference>
<dbReference type="GO" id="GO:0050998">
    <property type="term" value="F:nitric-oxide synthase binding"/>
    <property type="evidence" value="ECO:0000353"/>
    <property type="project" value="RGD"/>
</dbReference>
<dbReference type="GO" id="GO:0019901">
    <property type="term" value="F:protein kinase binding"/>
    <property type="evidence" value="ECO:0000353"/>
    <property type="project" value="RGD"/>
</dbReference>
<dbReference type="GO" id="GO:0019903">
    <property type="term" value="F:protein phosphatase binding"/>
    <property type="evidence" value="ECO:0000266"/>
    <property type="project" value="RGD"/>
</dbReference>
<dbReference type="GO" id="GO:1990782">
    <property type="term" value="F:protein tyrosine kinase binding"/>
    <property type="evidence" value="ECO:0000353"/>
    <property type="project" value="RGD"/>
</dbReference>
<dbReference type="GO" id="GO:0044877">
    <property type="term" value="F:protein-containing complex binding"/>
    <property type="evidence" value="ECO:0000353"/>
    <property type="project" value="RGD"/>
</dbReference>
<dbReference type="GO" id="GO:0003723">
    <property type="term" value="F:RNA binding"/>
    <property type="evidence" value="ECO:0000266"/>
    <property type="project" value="RGD"/>
</dbReference>
<dbReference type="GO" id="GO:0034332">
    <property type="term" value="P:adherens junction organization"/>
    <property type="evidence" value="ECO:0000318"/>
    <property type="project" value="GO_Central"/>
</dbReference>
<dbReference type="GO" id="GO:0048514">
    <property type="term" value="P:blood vessel morphogenesis"/>
    <property type="evidence" value="ECO:0000266"/>
    <property type="project" value="RGD"/>
</dbReference>
<dbReference type="GO" id="GO:0048854">
    <property type="term" value="P:brain morphogenesis"/>
    <property type="evidence" value="ECO:0000266"/>
    <property type="project" value="RGD"/>
</dbReference>
<dbReference type="GO" id="GO:0016339">
    <property type="term" value="P:calcium-dependent cell-cell adhesion via plasma membrane cell adhesion molecules"/>
    <property type="evidence" value="ECO:0000315"/>
    <property type="project" value="RGD"/>
</dbReference>
<dbReference type="GO" id="GO:0007155">
    <property type="term" value="P:cell adhesion"/>
    <property type="evidence" value="ECO:0000266"/>
    <property type="project" value="RGD"/>
</dbReference>
<dbReference type="GO" id="GO:0016477">
    <property type="term" value="P:cell migration"/>
    <property type="evidence" value="ECO:0000266"/>
    <property type="project" value="RGD"/>
</dbReference>
<dbReference type="GO" id="GO:0000902">
    <property type="term" value="P:cell morphogenesis"/>
    <property type="evidence" value="ECO:0000318"/>
    <property type="project" value="GO_Central"/>
</dbReference>
<dbReference type="GO" id="GO:0098609">
    <property type="term" value="P:cell-cell adhesion"/>
    <property type="evidence" value="ECO:0000314"/>
    <property type="project" value="RGD"/>
</dbReference>
<dbReference type="GO" id="GO:0044331">
    <property type="term" value="P:cell-cell adhesion mediated by cadherin"/>
    <property type="evidence" value="ECO:0000250"/>
    <property type="project" value="UniProtKB"/>
</dbReference>
<dbReference type="GO" id="GO:0007043">
    <property type="term" value="P:cell-cell junction assembly"/>
    <property type="evidence" value="ECO:0000250"/>
    <property type="project" value="UniProtKB"/>
</dbReference>
<dbReference type="GO" id="GO:0021987">
    <property type="term" value="P:cerebral cortex development"/>
    <property type="evidence" value="ECO:0000266"/>
    <property type="project" value="RGD"/>
</dbReference>
<dbReference type="GO" id="GO:0010001">
    <property type="term" value="P:glial cell differentiation"/>
    <property type="evidence" value="ECO:0000250"/>
    <property type="project" value="UniProtKB"/>
</dbReference>
<dbReference type="GO" id="GO:0007157">
    <property type="term" value="P:heterophilic cell-cell adhesion via plasma membrane cell adhesion molecules"/>
    <property type="evidence" value="ECO:0000266"/>
    <property type="project" value="RGD"/>
</dbReference>
<dbReference type="GO" id="GO:0048872">
    <property type="term" value="P:homeostasis of number of cells"/>
    <property type="evidence" value="ECO:0000266"/>
    <property type="project" value="RGD"/>
</dbReference>
<dbReference type="GO" id="GO:0007156">
    <property type="term" value="P:homophilic cell adhesion via plasma membrane adhesion molecules"/>
    <property type="evidence" value="ECO:0000266"/>
    <property type="project" value="RGD"/>
</dbReference>
<dbReference type="GO" id="GO:0090497">
    <property type="term" value="P:mesenchymal cell migration"/>
    <property type="evidence" value="ECO:0000266"/>
    <property type="project" value="RGD"/>
</dbReference>
<dbReference type="GO" id="GO:0050804">
    <property type="term" value="P:modulation of chemical synaptic transmission"/>
    <property type="evidence" value="ECO:0000314"/>
    <property type="project" value="SynGO"/>
</dbReference>
<dbReference type="GO" id="GO:0090090">
    <property type="term" value="P:negative regulation of canonical Wnt signaling pathway"/>
    <property type="evidence" value="ECO:0000266"/>
    <property type="project" value="RGD"/>
</dbReference>
<dbReference type="GO" id="GO:0014032">
    <property type="term" value="P:neural crest cell development"/>
    <property type="evidence" value="ECO:0000250"/>
    <property type="project" value="UniProtKB"/>
</dbReference>
<dbReference type="GO" id="GO:0060563">
    <property type="term" value="P:neuroepithelial cell differentiation"/>
    <property type="evidence" value="ECO:0000266"/>
    <property type="project" value="RGD"/>
</dbReference>
<dbReference type="GO" id="GO:0097118">
    <property type="term" value="P:neuroligin clustering involved in postsynaptic membrane assembly"/>
    <property type="evidence" value="ECO:0000266"/>
    <property type="project" value="RGD"/>
</dbReference>
<dbReference type="GO" id="GO:0097150">
    <property type="term" value="P:neuronal stem cell population maintenance"/>
    <property type="evidence" value="ECO:0000250"/>
    <property type="project" value="UniProtKB"/>
</dbReference>
<dbReference type="GO" id="GO:0043410">
    <property type="term" value="P:positive regulation of MAPK cascade"/>
    <property type="evidence" value="ECO:0000266"/>
    <property type="project" value="RGD"/>
</dbReference>
<dbReference type="GO" id="GO:2000809">
    <property type="term" value="P:positive regulation of synaptic vesicle clustering"/>
    <property type="evidence" value="ECO:0000266"/>
    <property type="project" value="RGD"/>
</dbReference>
<dbReference type="GO" id="GO:0072659">
    <property type="term" value="P:protein localization to plasma membrane"/>
    <property type="evidence" value="ECO:0000266"/>
    <property type="project" value="RGD"/>
</dbReference>
<dbReference type="GO" id="GO:0060019">
    <property type="term" value="P:radial glial cell differentiation"/>
    <property type="evidence" value="ECO:0000266"/>
    <property type="project" value="RGD"/>
</dbReference>
<dbReference type="GO" id="GO:0050770">
    <property type="term" value="P:regulation of axonogenesis"/>
    <property type="evidence" value="ECO:0000315"/>
    <property type="project" value="RGD"/>
</dbReference>
<dbReference type="GO" id="GO:0031641">
    <property type="term" value="P:regulation of myelination"/>
    <property type="evidence" value="ECO:0000315"/>
    <property type="project" value="RGD"/>
</dbReference>
<dbReference type="GO" id="GO:0070445">
    <property type="term" value="P:regulation of oligodendrocyte progenitor proliferation"/>
    <property type="evidence" value="ECO:0000266"/>
    <property type="project" value="RGD"/>
</dbReference>
<dbReference type="GO" id="GO:1902897">
    <property type="term" value="P:regulation of postsynaptic density protein 95 clustering"/>
    <property type="evidence" value="ECO:0000266"/>
    <property type="project" value="RGD"/>
</dbReference>
<dbReference type="GO" id="GO:0032880">
    <property type="term" value="P:regulation of protein localization"/>
    <property type="evidence" value="ECO:0000315"/>
    <property type="project" value="RGD"/>
</dbReference>
<dbReference type="GO" id="GO:0035023">
    <property type="term" value="P:regulation of Rho protein signal transduction"/>
    <property type="evidence" value="ECO:0000315"/>
    <property type="project" value="RGD"/>
</dbReference>
<dbReference type="GO" id="GO:0051146">
    <property type="term" value="P:striated muscle cell differentiation"/>
    <property type="evidence" value="ECO:0000266"/>
    <property type="project" value="RGD"/>
</dbReference>
<dbReference type="GO" id="GO:0007416">
    <property type="term" value="P:synapse assembly"/>
    <property type="evidence" value="ECO:0000315"/>
    <property type="project" value="RGD"/>
</dbReference>
<dbReference type="GO" id="GO:0097091">
    <property type="term" value="P:synaptic vesicle clustering"/>
    <property type="evidence" value="ECO:0000250"/>
    <property type="project" value="UniProtKB"/>
</dbReference>
<dbReference type="GO" id="GO:0021537">
    <property type="term" value="P:telencephalon development"/>
    <property type="evidence" value="ECO:0000266"/>
    <property type="project" value="RGD"/>
</dbReference>
<dbReference type="GO" id="GO:0003323">
    <property type="term" value="P:type B pancreatic cell development"/>
    <property type="evidence" value="ECO:0000250"/>
    <property type="project" value="UniProtKB"/>
</dbReference>
<dbReference type="CDD" id="cd11304">
    <property type="entry name" value="Cadherin_repeat"/>
    <property type="match status" value="3"/>
</dbReference>
<dbReference type="FunFam" id="2.60.40.60:FF:000011">
    <property type="entry name" value="Cadherin 1"/>
    <property type="match status" value="1"/>
</dbReference>
<dbReference type="FunFam" id="2.60.40.60:FF:000019">
    <property type="entry name" value="Cadherin 2"/>
    <property type="match status" value="1"/>
</dbReference>
<dbReference type="FunFam" id="2.60.40.60:FF:000022">
    <property type="entry name" value="Cadherin 2"/>
    <property type="match status" value="1"/>
</dbReference>
<dbReference type="FunFam" id="2.60.40.60:FF:000027">
    <property type="entry name" value="Cadherin 2"/>
    <property type="match status" value="1"/>
</dbReference>
<dbReference type="FunFam" id="2.60.40.60:FF:000045">
    <property type="entry name" value="Cadherin 2"/>
    <property type="match status" value="1"/>
</dbReference>
<dbReference type="FunFam" id="4.10.900.10:FF:000001">
    <property type="entry name" value="Cadherin 2"/>
    <property type="match status" value="1"/>
</dbReference>
<dbReference type="FunFam" id="2.60.40.60:FF:000139">
    <property type="entry name" value="Cadherin-2 preproprotein"/>
    <property type="match status" value="1"/>
</dbReference>
<dbReference type="Gene3D" id="2.60.40.60">
    <property type="entry name" value="Cadherins"/>
    <property type="match status" value="6"/>
</dbReference>
<dbReference type="Gene3D" id="4.10.900.10">
    <property type="entry name" value="TCF3-CBD (Catenin binding domain)"/>
    <property type="match status" value="1"/>
</dbReference>
<dbReference type="InterPro" id="IPR039808">
    <property type="entry name" value="Cadherin"/>
</dbReference>
<dbReference type="InterPro" id="IPR002126">
    <property type="entry name" value="Cadherin-like_dom"/>
</dbReference>
<dbReference type="InterPro" id="IPR015919">
    <property type="entry name" value="Cadherin-like_sf"/>
</dbReference>
<dbReference type="InterPro" id="IPR020894">
    <property type="entry name" value="Cadherin_CS"/>
</dbReference>
<dbReference type="InterPro" id="IPR014868">
    <property type="entry name" value="Cadherin_pro_dom"/>
</dbReference>
<dbReference type="InterPro" id="IPR000233">
    <property type="entry name" value="Cadherin_Y-type_LIR"/>
</dbReference>
<dbReference type="InterPro" id="IPR027397">
    <property type="entry name" value="Catenin-bd_sf"/>
</dbReference>
<dbReference type="PANTHER" id="PTHR24027:SF79">
    <property type="entry name" value="CADHERIN-2"/>
    <property type="match status" value="1"/>
</dbReference>
<dbReference type="PANTHER" id="PTHR24027">
    <property type="entry name" value="CADHERIN-23"/>
    <property type="match status" value="1"/>
</dbReference>
<dbReference type="Pfam" id="PF01049">
    <property type="entry name" value="CADH_Y-type_LIR"/>
    <property type="match status" value="1"/>
</dbReference>
<dbReference type="Pfam" id="PF00028">
    <property type="entry name" value="Cadherin"/>
    <property type="match status" value="5"/>
</dbReference>
<dbReference type="Pfam" id="PF08758">
    <property type="entry name" value="Cadherin_pro"/>
    <property type="match status" value="1"/>
</dbReference>
<dbReference type="PRINTS" id="PR00205">
    <property type="entry name" value="CADHERIN"/>
</dbReference>
<dbReference type="PRINTS" id="PR01820">
    <property type="entry name" value="DESMOCOLLIN"/>
</dbReference>
<dbReference type="SMART" id="SM00112">
    <property type="entry name" value="CA"/>
    <property type="match status" value="5"/>
</dbReference>
<dbReference type="SMART" id="SM01055">
    <property type="entry name" value="Cadherin_pro"/>
    <property type="match status" value="1"/>
</dbReference>
<dbReference type="SUPFAM" id="SSF49313">
    <property type="entry name" value="Cadherin-like"/>
    <property type="match status" value="6"/>
</dbReference>
<dbReference type="PROSITE" id="PS00232">
    <property type="entry name" value="CADHERIN_1"/>
    <property type="match status" value="3"/>
</dbReference>
<dbReference type="PROSITE" id="PS50268">
    <property type="entry name" value="CADHERIN_2"/>
    <property type="match status" value="5"/>
</dbReference>